<keyword id="KW-0456">Lyase</keyword>
<keyword id="KW-0663">Pyridoxal phosphate</keyword>
<sequence length="328" mass="35153">MPLHNLTRFPRLEFIGAPTPLEYLPRFSDYLGREIFIKRDDVTPMAMGGNKLRKLEFLAADALREGADTLITAGAIQSNHVRQTAAVAAKLGLHCVALLENPIGTTAENYLTNGNRLLLDLFNTQIEMCDALTDPNAQLEELATRVEAQGFRPYVIPVGGSNALGALGYVESALEIAQQCEGAVNISSVVVASGSAGTHAGLAVGLEHLMPESELIGVTVSRSVADQLPKVVNLQQAIAKELELTASAEILLWDDYFAPGYGVPNDEGMEAVKLLARLEGILLDPVYTGKAMAGLIDGISQKRFKDEGPILFIHTGGAPALFAYHPHV</sequence>
<evidence type="ECO:0000255" key="1">
    <source>
        <dbReference type="HAMAP-Rule" id="MF_01045"/>
    </source>
</evidence>
<name>DCYD_ECOSM</name>
<organism>
    <name type="scientific">Escherichia coli (strain SMS-3-5 / SECEC)</name>
    <dbReference type="NCBI Taxonomy" id="439855"/>
    <lineage>
        <taxon>Bacteria</taxon>
        <taxon>Pseudomonadati</taxon>
        <taxon>Pseudomonadota</taxon>
        <taxon>Gammaproteobacteria</taxon>
        <taxon>Enterobacterales</taxon>
        <taxon>Enterobacteriaceae</taxon>
        <taxon>Escherichia</taxon>
    </lineage>
</organism>
<comment type="function">
    <text evidence="1">Catalyzes the alpha,beta-elimination reaction of D-cysteine and of several D-cysteine derivatives. It could be a defense mechanism against D-cysteine.</text>
</comment>
<comment type="catalytic activity">
    <reaction evidence="1">
        <text>D-cysteine + H2O = hydrogen sulfide + pyruvate + NH4(+) + H(+)</text>
        <dbReference type="Rhea" id="RHEA:11268"/>
        <dbReference type="ChEBI" id="CHEBI:15361"/>
        <dbReference type="ChEBI" id="CHEBI:15377"/>
        <dbReference type="ChEBI" id="CHEBI:15378"/>
        <dbReference type="ChEBI" id="CHEBI:28938"/>
        <dbReference type="ChEBI" id="CHEBI:29919"/>
        <dbReference type="ChEBI" id="CHEBI:35236"/>
        <dbReference type="EC" id="4.4.1.15"/>
    </reaction>
</comment>
<comment type="cofactor">
    <cofactor evidence="1">
        <name>pyridoxal 5'-phosphate</name>
        <dbReference type="ChEBI" id="CHEBI:597326"/>
    </cofactor>
</comment>
<comment type="subunit">
    <text evidence="1">Homodimer.</text>
</comment>
<comment type="similarity">
    <text evidence="1">Belongs to the ACC deaminase/D-cysteine desulfhydrase family.</text>
</comment>
<reference key="1">
    <citation type="journal article" date="2008" name="J. Bacteriol.">
        <title>Insights into the environmental resistance gene pool from the genome sequence of the multidrug-resistant environmental isolate Escherichia coli SMS-3-5.</title>
        <authorList>
            <person name="Fricke W.F."/>
            <person name="Wright M.S."/>
            <person name="Lindell A.H."/>
            <person name="Harkins D.M."/>
            <person name="Baker-Austin C."/>
            <person name="Ravel J."/>
            <person name="Stepanauskas R."/>
        </authorList>
    </citation>
    <scope>NUCLEOTIDE SEQUENCE [LARGE SCALE GENOMIC DNA]</scope>
    <source>
        <strain>SMS-3-5 / SECEC</strain>
    </source>
</reference>
<protein>
    <recommendedName>
        <fullName evidence="1">D-cysteine desulfhydrase</fullName>
        <ecNumber evidence="1">4.4.1.15</ecNumber>
    </recommendedName>
</protein>
<proteinExistence type="inferred from homology"/>
<gene>
    <name evidence="1" type="primary">dcyD</name>
    <name type="ordered locus">EcSMS35_1263</name>
</gene>
<feature type="chain" id="PRO_1000136162" description="D-cysteine desulfhydrase">
    <location>
        <begin position="1"/>
        <end position="328"/>
    </location>
</feature>
<feature type="modified residue" description="N6-(pyridoxal phosphate)lysine" evidence="1">
    <location>
        <position position="51"/>
    </location>
</feature>
<dbReference type="EC" id="4.4.1.15" evidence="1"/>
<dbReference type="EMBL" id="CP000970">
    <property type="protein sequence ID" value="ACB19636.1"/>
    <property type="molecule type" value="Genomic_DNA"/>
</dbReference>
<dbReference type="RefSeq" id="WP_001128215.1">
    <property type="nucleotide sequence ID" value="NC_010498.1"/>
</dbReference>
<dbReference type="SMR" id="B1LQT7"/>
<dbReference type="GeneID" id="75205835"/>
<dbReference type="KEGG" id="ecm:EcSMS35_1263"/>
<dbReference type="HOGENOM" id="CLU_048897_1_0_6"/>
<dbReference type="Proteomes" id="UP000007011">
    <property type="component" value="Chromosome"/>
</dbReference>
<dbReference type="GO" id="GO:0019148">
    <property type="term" value="F:D-cysteine desulfhydrase activity"/>
    <property type="evidence" value="ECO:0007669"/>
    <property type="project" value="UniProtKB-UniRule"/>
</dbReference>
<dbReference type="GO" id="GO:0046416">
    <property type="term" value="P:D-amino acid metabolic process"/>
    <property type="evidence" value="ECO:0007669"/>
    <property type="project" value="UniProtKB-UniRule"/>
</dbReference>
<dbReference type="CDD" id="cd06449">
    <property type="entry name" value="ACCD"/>
    <property type="match status" value="1"/>
</dbReference>
<dbReference type="FunFam" id="3.40.50.1100:FF:000019">
    <property type="entry name" value="D-cysteine desulfhydrase"/>
    <property type="match status" value="1"/>
</dbReference>
<dbReference type="Gene3D" id="3.40.50.1100">
    <property type="match status" value="2"/>
</dbReference>
<dbReference type="HAMAP" id="MF_01045">
    <property type="entry name" value="D_Cys_desulfhydr"/>
    <property type="match status" value="1"/>
</dbReference>
<dbReference type="InterPro" id="IPR027278">
    <property type="entry name" value="ACCD_DCysDesulf"/>
</dbReference>
<dbReference type="InterPro" id="IPR005966">
    <property type="entry name" value="D-Cys_desShydrase"/>
</dbReference>
<dbReference type="InterPro" id="IPR023702">
    <property type="entry name" value="D_Cys_desulphydr_bac"/>
</dbReference>
<dbReference type="InterPro" id="IPR001926">
    <property type="entry name" value="TrpB-like_PALP"/>
</dbReference>
<dbReference type="InterPro" id="IPR036052">
    <property type="entry name" value="TrpB-like_PALP_sf"/>
</dbReference>
<dbReference type="NCBIfam" id="TIGR01275">
    <property type="entry name" value="ACC_deam_rel"/>
    <property type="match status" value="1"/>
</dbReference>
<dbReference type="NCBIfam" id="NF003029">
    <property type="entry name" value="PRK03910.1-1"/>
    <property type="match status" value="1"/>
</dbReference>
<dbReference type="NCBIfam" id="NF003030">
    <property type="entry name" value="PRK03910.1-3"/>
    <property type="match status" value="1"/>
</dbReference>
<dbReference type="NCBIfam" id="NF003032">
    <property type="entry name" value="PRK03910.1-5"/>
    <property type="match status" value="1"/>
</dbReference>
<dbReference type="PANTHER" id="PTHR43780">
    <property type="entry name" value="1-AMINOCYCLOPROPANE-1-CARBOXYLATE DEAMINASE-RELATED"/>
    <property type="match status" value="1"/>
</dbReference>
<dbReference type="PANTHER" id="PTHR43780:SF2">
    <property type="entry name" value="1-AMINOCYCLOPROPANE-1-CARBOXYLATE DEAMINASE-RELATED"/>
    <property type="match status" value="1"/>
</dbReference>
<dbReference type="Pfam" id="PF00291">
    <property type="entry name" value="PALP"/>
    <property type="match status" value="1"/>
</dbReference>
<dbReference type="PIRSF" id="PIRSF006278">
    <property type="entry name" value="ACCD_DCysDesulf"/>
    <property type="match status" value="1"/>
</dbReference>
<dbReference type="SUPFAM" id="SSF53686">
    <property type="entry name" value="Tryptophan synthase beta subunit-like PLP-dependent enzymes"/>
    <property type="match status" value="1"/>
</dbReference>
<accession>B1LQT7</accession>